<proteinExistence type="evidence at protein level"/>
<organism>
    <name type="scientific">Mus musculus</name>
    <name type="common">Mouse</name>
    <dbReference type="NCBI Taxonomy" id="10090"/>
    <lineage>
        <taxon>Eukaryota</taxon>
        <taxon>Metazoa</taxon>
        <taxon>Chordata</taxon>
        <taxon>Craniata</taxon>
        <taxon>Vertebrata</taxon>
        <taxon>Euteleostomi</taxon>
        <taxon>Mammalia</taxon>
        <taxon>Eutheria</taxon>
        <taxon>Euarchontoglires</taxon>
        <taxon>Glires</taxon>
        <taxon>Rodentia</taxon>
        <taxon>Myomorpha</taxon>
        <taxon>Muroidea</taxon>
        <taxon>Muridae</taxon>
        <taxon>Murinae</taxon>
        <taxon>Mus</taxon>
        <taxon>Mus</taxon>
    </lineage>
</organism>
<gene>
    <name evidence="8" type="primary">Krt35</name>
    <name evidence="8" type="synonym">Krt1-24</name>
</gene>
<evidence type="ECO:0000250" key="1">
    <source>
        <dbReference type="UniProtKB" id="Q92764"/>
    </source>
</evidence>
<evidence type="ECO:0000255" key="2"/>
<evidence type="ECO:0000255" key="3">
    <source>
        <dbReference type="PROSITE-ProRule" id="PRU01188"/>
    </source>
</evidence>
<evidence type="ECO:0000305" key="4"/>
<evidence type="ECO:0000312" key="5">
    <source>
        <dbReference type="EMBL" id="AAD01693.1"/>
    </source>
</evidence>
<evidence type="ECO:0000312" key="6">
    <source>
        <dbReference type="EMBL" id="AAI00543.1"/>
    </source>
</evidence>
<evidence type="ECO:0000312" key="7">
    <source>
        <dbReference type="EMBL" id="CAM15793.1"/>
    </source>
</evidence>
<evidence type="ECO:0000312" key="8">
    <source>
        <dbReference type="MGI" id="MGI:1858899"/>
    </source>
</evidence>
<accession>Q497I4</accession>
<accession>B2RU48</accession>
<accession>Q9Z2T8</accession>
<sequence>MASKCLKASFSSGSLKSPGKAGGGSTRVSNMYSSSSCKLPSPSRGARSFSVCSAGLGRGNYRVSSCLPALCLPTGGFATSYGTGGGWFGEGILTGNEKETMQSLNDRLASYLEKVRQLEQENASLESRIREWCEQQVPYMCPDYQSYFRTMEELQKKTLCSKAENARLVVQIDNAKLAADDFRTKYETEVSLRQLVEADINGLRRILDDLTLCKADLEAQVESLKEELLCLKKNHEEEVNSLRCQLGDRLNVEVDAAPPVDLNRVLDEMRCQYETLVENNRRDAEDWYDTQTEELNQQVVSSSEQLQSCQSDIIELRRTVNSLEIELQAQQSMRDALDSTLAETEGRYSSQLAQMQCMIGNVESQLGEIRADLERQNQEYQVLLDVRARLECEINTYRGLLESEDSKLPCNPCAPDYSSSKSCLPCLPAVSCSTGAARTTCSPRPVCVPCPGGRF</sequence>
<protein>
    <recommendedName>
        <fullName evidence="1">Keratin, type I cuticular Ha5</fullName>
    </recommendedName>
    <alternativeName>
        <fullName>Hair keratin, type I Ha5</fullName>
    </alternativeName>
    <alternativeName>
        <fullName evidence="1 7">Keratin-35</fullName>
        <shortName>K35</shortName>
    </alternativeName>
</protein>
<feature type="chain" id="PRO_0000361025" description="Keratin, type I cuticular Ha5">
    <location>
        <begin position="1"/>
        <end position="455"/>
    </location>
</feature>
<feature type="domain" description="IF rod" evidence="3">
    <location>
        <begin position="97"/>
        <end position="408"/>
    </location>
</feature>
<feature type="region of interest" description="Head" evidence="2">
    <location>
        <begin position="1"/>
        <end position="97"/>
    </location>
</feature>
<feature type="region of interest" description="Coil 1A" evidence="2">
    <location>
        <begin position="98"/>
        <end position="132"/>
    </location>
</feature>
<feature type="region of interest" description="Linker 1" evidence="2">
    <location>
        <begin position="133"/>
        <end position="143"/>
    </location>
</feature>
<feature type="region of interest" description="Coil 1B" evidence="2">
    <location>
        <begin position="144"/>
        <end position="244"/>
    </location>
</feature>
<feature type="region of interest" description="Linker 12" evidence="2">
    <location>
        <begin position="245"/>
        <end position="260"/>
    </location>
</feature>
<feature type="region of interest" description="Coil 2" evidence="2">
    <location>
        <begin position="261"/>
        <end position="404"/>
    </location>
</feature>
<feature type="region of interest" description="Tail" evidence="2">
    <location>
        <begin position="405"/>
        <end position="455"/>
    </location>
</feature>
<feature type="site" description="Stutter" evidence="2">
    <location>
        <position position="316"/>
    </location>
</feature>
<feature type="sequence conflict" description="In Ref. 1; AAD01693 and 3; AAI40966." evidence="4" ref="1 3">
    <original>A</original>
    <variation>V</variation>
    <location>
        <position position="429"/>
    </location>
</feature>
<feature type="sequence conflict" description="In Ref. 1; AAD01693." evidence="4" ref="1">
    <original>A</original>
    <variation>R</variation>
    <location>
        <position position="437"/>
    </location>
</feature>
<comment type="miscellaneous">
    <text evidence="4">There are two types of hair/microfibrillar keratin, I (acidic) and II (neutral to basic).</text>
</comment>
<comment type="similarity">
    <text evidence="3">Belongs to the intermediate filament family.</text>
</comment>
<comment type="sequence caution" evidence="4">
    <conflict type="erroneous initiation">
        <sequence resource="EMBL-CDS" id="AAD01693"/>
    </conflict>
</comment>
<comment type="sequence caution" evidence="4">
    <conflict type="erroneous initiation">
        <sequence resource="EMBL-CDS" id="AAI40966"/>
    </conflict>
</comment>
<name>KRT35_MOUSE</name>
<keyword id="KW-0175">Coiled coil</keyword>
<keyword id="KW-0403">Intermediate filament</keyword>
<keyword id="KW-0416">Keratin</keyword>
<keyword id="KW-1185">Reference proteome</keyword>
<dbReference type="EMBL" id="AF020790">
    <property type="protein sequence ID" value="AAD01693.1"/>
    <property type="status" value="ALT_INIT"/>
    <property type="molecule type" value="mRNA"/>
</dbReference>
<dbReference type="EMBL" id="AL662808">
    <property type="protein sequence ID" value="CAM15793.1"/>
    <property type="molecule type" value="Genomic_DNA"/>
</dbReference>
<dbReference type="EMBL" id="BC100542">
    <property type="protein sequence ID" value="AAI00543.1"/>
    <property type="molecule type" value="mRNA"/>
</dbReference>
<dbReference type="EMBL" id="BC140965">
    <property type="protein sequence ID" value="AAI40966.1"/>
    <property type="status" value="ALT_INIT"/>
    <property type="molecule type" value="mRNA"/>
</dbReference>
<dbReference type="CCDS" id="CCDS25407.2"/>
<dbReference type="RefSeq" id="NP_058576.2">
    <property type="nucleotide sequence ID" value="NM_016880.2"/>
</dbReference>
<dbReference type="SMR" id="Q497I4"/>
<dbReference type="BioGRID" id="207334">
    <property type="interactions" value="5"/>
</dbReference>
<dbReference type="FunCoup" id="Q497I4">
    <property type="interactions" value="141"/>
</dbReference>
<dbReference type="STRING" id="10090.ENSMUSP00000099416"/>
<dbReference type="iPTMnet" id="Q497I4"/>
<dbReference type="PhosphoSitePlus" id="Q497I4"/>
<dbReference type="jPOST" id="Q497I4"/>
<dbReference type="PaxDb" id="10090-ENSMUSP00000099416"/>
<dbReference type="PeptideAtlas" id="Q497I4"/>
<dbReference type="ProteomicsDB" id="264871"/>
<dbReference type="Antibodypedia" id="28853">
    <property type="antibodies" value="149 antibodies from 20 providers"/>
</dbReference>
<dbReference type="DNASU" id="53617"/>
<dbReference type="Ensembl" id="ENSMUST00000103127.4">
    <property type="protein sequence ID" value="ENSMUSP00000099416.4"/>
    <property type="gene ID" value="ENSMUSG00000048013.10"/>
</dbReference>
<dbReference type="GeneID" id="53617"/>
<dbReference type="KEGG" id="mmu:53617"/>
<dbReference type="UCSC" id="uc011yex.1">
    <property type="organism name" value="mouse"/>
</dbReference>
<dbReference type="AGR" id="MGI:1858899"/>
<dbReference type="CTD" id="3886"/>
<dbReference type="MGI" id="MGI:1858899">
    <property type="gene designation" value="Krt35"/>
</dbReference>
<dbReference type="VEuPathDB" id="HostDB:ENSMUSG00000048013"/>
<dbReference type="eggNOG" id="ENOG502QQY9">
    <property type="taxonomic scope" value="Eukaryota"/>
</dbReference>
<dbReference type="GeneTree" id="ENSGT00940000161787"/>
<dbReference type="HOGENOM" id="CLU_012560_8_0_1"/>
<dbReference type="InParanoid" id="Q497I4"/>
<dbReference type="OMA" id="SYRVASC"/>
<dbReference type="OrthoDB" id="2441647at2759"/>
<dbReference type="PhylomeDB" id="Q497I4"/>
<dbReference type="TreeFam" id="TF332742"/>
<dbReference type="Reactome" id="R-MMU-6805567">
    <property type="pathway name" value="Keratinization"/>
</dbReference>
<dbReference type="Reactome" id="R-MMU-6809371">
    <property type="pathway name" value="Formation of the cornified envelope"/>
</dbReference>
<dbReference type="BioGRID-ORCS" id="53617">
    <property type="hits" value="3 hits in 76 CRISPR screens"/>
</dbReference>
<dbReference type="PRO" id="PR:Q497I4"/>
<dbReference type="Proteomes" id="UP000000589">
    <property type="component" value="Chromosome 11"/>
</dbReference>
<dbReference type="RNAct" id="Q497I4">
    <property type="molecule type" value="protein"/>
</dbReference>
<dbReference type="Bgee" id="ENSMUSG00000048013">
    <property type="expression patterns" value="Expressed in hair follicle and 21 other cell types or tissues"/>
</dbReference>
<dbReference type="GO" id="GO:0005882">
    <property type="term" value="C:intermediate filament"/>
    <property type="evidence" value="ECO:0007669"/>
    <property type="project" value="UniProtKB-KW"/>
</dbReference>
<dbReference type="GO" id="GO:0005198">
    <property type="term" value="F:structural molecule activity"/>
    <property type="evidence" value="ECO:0007669"/>
    <property type="project" value="InterPro"/>
</dbReference>
<dbReference type="FunFam" id="1.20.5.1160:FF:000002">
    <property type="entry name" value="Type I keratin 10"/>
    <property type="match status" value="1"/>
</dbReference>
<dbReference type="FunFam" id="1.20.5.170:FF:000002">
    <property type="entry name" value="Type I keratin KA11"/>
    <property type="match status" value="1"/>
</dbReference>
<dbReference type="FunFam" id="1.20.5.500:FF:000001">
    <property type="entry name" value="Type II keratin 23"/>
    <property type="match status" value="1"/>
</dbReference>
<dbReference type="Gene3D" id="1.20.5.170">
    <property type="match status" value="1"/>
</dbReference>
<dbReference type="Gene3D" id="1.20.5.500">
    <property type="entry name" value="Single helix bin"/>
    <property type="match status" value="1"/>
</dbReference>
<dbReference type="Gene3D" id="1.20.5.1160">
    <property type="entry name" value="Vasodilator-stimulated phosphoprotein"/>
    <property type="match status" value="1"/>
</dbReference>
<dbReference type="InterPro" id="IPR018039">
    <property type="entry name" value="IF_conserved"/>
</dbReference>
<dbReference type="InterPro" id="IPR039008">
    <property type="entry name" value="IF_rod_dom"/>
</dbReference>
<dbReference type="InterPro" id="IPR002957">
    <property type="entry name" value="Keratin_I"/>
</dbReference>
<dbReference type="PANTHER" id="PTHR23239">
    <property type="entry name" value="INTERMEDIATE FILAMENT"/>
    <property type="match status" value="1"/>
</dbReference>
<dbReference type="PANTHER" id="PTHR23239:SF193">
    <property type="entry name" value="KERATIN, TYPE I CUTICULAR HA5"/>
    <property type="match status" value="1"/>
</dbReference>
<dbReference type="Pfam" id="PF00038">
    <property type="entry name" value="Filament"/>
    <property type="match status" value="1"/>
</dbReference>
<dbReference type="PRINTS" id="PR01248">
    <property type="entry name" value="TYPE1KERATIN"/>
</dbReference>
<dbReference type="SMART" id="SM01391">
    <property type="entry name" value="Filament"/>
    <property type="match status" value="1"/>
</dbReference>
<dbReference type="SUPFAM" id="SSF64593">
    <property type="entry name" value="Intermediate filament protein, coiled coil region"/>
    <property type="match status" value="2"/>
</dbReference>
<dbReference type="PROSITE" id="PS00226">
    <property type="entry name" value="IF_ROD_1"/>
    <property type="match status" value="1"/>
</dbReference>
<dbReference type="PROSITE" id="PS51842">
    <property type="entry name" value="IF_ROD_2"/>
    <property type="match status" value="1"/>
</dbReference>
<reference evidence="5" key="1">
    <citation type="submission" date="1997-08" db="EMBL/GenBank/DDBJ databases">
        <authorList>
            <person name="Inoue T."/>
            <person name="Kizawa K."/>
        </authorList>
    </citation>
    <scope>NUCLEOTIDE SEQUENCE [MRNA]</scope>
    <source>
        <strain evidence="5">ICR</strain>
        <tissue evidence="5">Skin</tissue>
    </source>
</reference>
<reference key="2">
    <citation type="journal article" date="2009" name="PLoS Biol.">
        <title>Lineage-specific biology revealed by a finished genome assembly of the mouse.</title>
        <authorList>
            <person name="Church D.M."/>
            <person name="Goodstadt L."/>
            <person name="Hillier L.W."/>
            <person name="Zody M.C."/>
            <person name="Goldstein S."/>
            <person name="She X."/>
            <person name="Bult C.J."/>
            <person name="Agarwala R."/>
            <person name="Cherry J.L."/>
            <person name="DiCuccio M."/>
            <person name="Hlavina W."/>
            <person name="Kapustin Y."/>
            <person name="Meric P."/>
            <person name="Maglott D."/>
            <person name="Birtle Z."/>
            <person name="Marques A.C."/>
            <person name="Graves T."/>
            <person name="Zhou S."/>
            <person name="Teague B."/>
            <person name="Potamousis K."/>
            <person name="Churas C."/>
            <person name="Place M."/>
            <person name="Herschleb J."/>
            <person name="Runnheim R."/>
            <person name="Forrest D."/>
            <person name="Amos-Landgraf J."/>
            <person name="Schwartz D.C."/>
            <person name="Cheng Z."/>
            <person name="Lindblad-Toh K."/>
            <person name="Eichler E.E."/>
            <person name="Ponting C.P."/>
        </authorList>
    </citation>
    <scope>NUCLEOTIDE SEQUENCE [LARGE SCALE GENOMIC DNA]</scope>
    <source>
        <strain>C57BL/6J</strain>
    </source>
</reference>
<reference evidence="6" key="3">
    <citation type="journal article" date="2004" name="Genome Res.">
        <title>The status, quality, and expansion of the NIH full-length cDNA project: the Mammalian Gene Collection (MGC).</title>
        <authorList>
            <consortium name="The MGC Project Team"/>
        </authorList>
    </citation>
    <scope>NUCLEOTIDE SEQUENCE [LARGE SCALE MRNA]</scope>
</reference>
<reference key="4">
    <citation type="journal article" date="2010" name="Cell">
        <title>A tissue-specific atlas of mouse protein phosphorylation and expression.</title>
        <authorList>
            <person name="Huttlin E.L."/>
            <person name="Jedrychowski M.P."/>
            <person name="Elias J.E."/>
            <person name="Goswami T."/>
            <person name="Rad R."/>
            <person name="Beausoleil S.A."/>
            <person name="Villen J."/>
            <person name="Haas W."/>
            <person name="Sowa M.E."/>
            <person name="Gygi S.P."/>
        </authorList>
    </citation>
    <scope>IDENTIFICATION BY MASS SPECTROMETRY [LARGE SCALE ANALYSIS]</scope>
    <source>
        <tissue>Heart</tissue>
        <tissue>Liver</tissue>
    </source>
</reference>